<dbReference type="EMBL" id="CH902622">
    <property type="protein sequence ID" value="EDV34630.1"/>
    <property type="molecule type" value="Genomic_DNA"/>
</dbReference>
<dbReference type="SMR" id="B3MS75"/>
<dbReference type="FunCoup" id="B3MS75">
    <property type="interactions" value="2628"/>
</dbReference>
<dbReference type="STRING" id="7217.B3MS75"/>
<dbReference type="EnsemblMetazoa" id="FBtr0126119">
    <property type="protein sequence ID" value="FBpp0124611"/>
    <property type="gene ID" value="FBgn0098421"/>
</dbReference>
<dbReference type="EnsemblMetazoa" id="XM_001964145.4">
    <property type="protein sequence ID" value="XP_001964181.1"/>
    <property type="gene ID" value="LOC6504102"/>
</dbReference>
<dbReference type="GeneID" id="6504102"/>
<dbReference type="KEGG" id="dan:6504102"/>
<dbReference type="CTD" id="44409"/>
<dbReference type="eggNOG" id="KOG1104">
    <property type="taxonomic scope" value="Eukaryota"/>
</dbReference>
<dbReference type="HOGENOM" id="CLU_013207_0_0_1"/>
<dbReference type="InParanoid" id="B3MS75"/>
<dbReference type="OMA" id="CAAEGLM"/>
<dbReference type="OrthoDB" id="10252707at2759"/>
<dbReference type="PhylomeDB" id="B3MS75"/>
<dbReference type="ChiTaRS" id="Cbp80">
    <property type="organism name" value="fly"/>
</dbReference>
<dbReference type="Proteomes" id="UP000007801">
    <property type="component" value="Unassembled WGS sequence"/>
</dbReference>
<dbReference type="GO" id="GO:0005846">
    <property type="term" value="C:nuclear cap binding complex"/>
    <property type="evidence" value="ECO:0007669"/>
    <property type="project" value="InterPro"/>
</dbReference>
<dbReference type="GO" id="GO:0005634">
    <property type="term" value="C:nucleus"/>
    <property type="evidence" value="ECO:0007669"/>
    <property type="project" value="UniProtKB-SubCell"/>
</dbReference>
<dbReference type="GO" id="GO:0099524">
    <property type="term" value="C:postsynaptic cytosol"/>
    <property type="evidence" value="ECO:0007669"/>
    <property type="project" value="EnsemblMetazoa"/>
</dbReference>
<dbReference type="GO" id="GO:0099523">
    <property type="term" value="C:presynaptic cytosol"/>
    <property type="evidence" value="ECO:0007669"/>
    <property type="project" value="EnsemblMetazoa"/>
</dbReference>
<dbReference type="GO" id="GO:0003729">
    <property type="term" value="F:mRNA binding"/>
    <property type="evidence" value="ECO:0007669"/>
    <property type="project" value="TreeGrafter"/>
</dbReference>
<dbReference type="GO" id="GO:0000339">
    <property type="term" value="F:RNA cap binding"/>
    <property type="evidence" value="ECO:0007669"/>
    <property type="project" value="InterPro"/>
</dbReference>
<dbReference type="GO" id="GO:0006370">
    <property type="term" value="P:7-methylguanosine mRNA capping"/>
    <property type="evidence" value="ECO:0007669"/>
    <property type="project" value="UniProtKB-KW"/>
</dbReference>
<dbReference type="GO" id="GO:0006406">
    <property type="term" value="P:mRNA export from nucleus"/>
    <property type="evidence" value="ECO:0007669"/>
    <property type="project" value="InterPro"/>
</dbReference>
<dbReference type="GO" id="GO:0045071">
    <property type="term" value="P:negative regulation of viral genome replication"/>
    <property type="evidence" value="ECO:0007669"/>
    <property type="project" value="EnsemblMetazoa"/>
</dbReference>
<dbReference type="GO" id="GO:0000184">
    <property type="term" value="P:nuclear-transcribed mRNA catabolic process, nonsense-mediated decay"/>
    <property type="evidence" value="ECO:0007669"/>
    <property type="project" value="TreeGrafter"/>
</dbReference>
<dbReference type="GO" id="GO:0031053">
    <property type="term" value="P:primary miRNA processing"/>
    <property type="evidence" value="ECO:0007669"/>
    <property type="project" value="EnsemblMetazoa"/>
</dbReference>
<dbReference type="GO" id="GO:0035194">
    <property type="term" value="P:regulatory ncRNA-mediated post-transcriptional gene silencing"/>
    <property type="evidence" value="ECO:0007669"/>
    <property type="project" value="EnsemblMetazoa"/>
</dbReference>
<dbReference type="GO" id="GO:0008380">
    <property type="term" value="P:RNA splicing"/>
    <property type="evidence" value="ECO:0007669"/>
    <property type="project" value="UniProtKB-KW"/>
</dbReference>
<dbReference type="GO" id="GO:0030422">
    <property type="term" value="P:siRNA processing"/>
    <property type="evidence" value="ECO:0007669"/>
    <property type="project" value="EnsemblMetazoa"/>
</dbReference>
<dbReference type="FunFam" id="1.25.40.180:FF:000010">
    <property type="entry name" value="Nuclear cap-binding protein subunit 1"/>
    <property type="match status" value="1"/>
</dbReference>
<dbReference type="FunFam" id="1.25.40.180:FF:000041">
    <property type="entry name" value="Nuclear cap-binding protein subunit 1"/>
    <property type="match status" value="1"/>
</dbReference>
<dbReference type="Gene3D" id="1.25.40.180">
    <property type="match status" value="3"/>
</dbReference>
<dbReference type="InterPro" id="IPR016024">
    <property type="entry name" value="ARM-type_fold"/>
</dbReference>
<dbReference type="InterPro" id="IPR027159">
    <property type="entry name" value="CBP80"/>
</dbReference>
<dbReference type="InterPro" id="IPR015172">
    <property type="entry name" value="MIF4G-like_typ-1"/>
</dbReference>
<dbReference type="InterPro" id="IPR015174">
    <property type="entry name" value="MIF4G-like_typ-2"/>
</dbReference>
<dbReference type="InterPro" id="IPR003890">
    <property type="entry name" value="MIF4G-like_typ-3"/>
</dbReference>
<dbReference type="PANTHER" id="PTHR12412">
    <property type="entry name" value="CAP BINDING PROTEIN"/>
    <property type="match status" value="1"/>
</dbReference>
<dbReference type="PANTHER" id="PTHR12412:SF2">
    <property type="entry name" value="NUCLEAR CAP-BINDING PROTEIN SUBUNIT 1"/>
    <property type="match status" value="1"/>
</dbReference>
<dbReference type="Pfam" id="PF02854">
    <property type="entry name" value="MIF4G"/>
    <property type="match status" value="1"/>
</dbReference>
<dbReference type="Pfam" id="PF09088">
    <property type="entry name" value="MIF4G_like"/>
    <property type="match status" value="1"/>
</dbReference>
<dbReference type="Pfam" id="PF09090">
    <property type="entry name" value="MIF4G_like_2"/>
    <property type="match status" value="1"/>
</dbReference>
<dbReference type="SMART" id="SM00543">
    <property type="entry name" value="MIF4G"/>
    <property type="match status" value="1"/>
</dbReference>
<dbReference type="SUPFAM" id="SSF48371">
    <property type="entry name" value="ARM repeat"/>
    <property type="match status" value="3"/>
</dbReference>
<proteinExistence type="inferred from homology"/>
<evidence type="ECO:0000250" key="1"/>
<evidence type="ECO:0000256" key="2">
    <source>
        <dbReference type="SAM" id="MobiDB-lite"/>
    </source>
</evidence>
<evidence type="ECO:0000305" key="3"/>
<protein>
    <recommendedName>
        <fullName>Nuclear cap-binding protein subunit 1</fullName>
    </recommendedName>
    <alternativeName>
        <fullName>80 kDa nuclear cap-binding protein</fullName>
        <shortName>CBP80</shortName>
        <shortName>NCBP 80 kDa subunit</shortName>
    </alternativeName>
</protein>
<reference key="1">
    <citation type="journal article" date="2007" name="Nature">
        <title>Evolution of genes and genomes on the Drosophila phylogeny.</title>
        <authorList>
            <consortium name="Drosophila 12 genomes consortium"/>
        </authorList>
    </citation>
    <scope>NUCLEOTIDE SEQUENCE [LARGE SCALE GENOMIC DNA]</scope>
    <source>
        <strain>Tucson 14024-0371.13</strain>
    </source>
</reference>
<accession>B3MS75</accession>
<feature type="chain" id="PRO_0000385232" description="Nuclear cap-binding protein subunit 1">
    <location>
        <begin position="1"/>
        <end position="800"/>
    </location>
</feature>
<feature type="domain" description="MIF4G">
    <location>
        <begin position="31"/>
        <end position="243"/>
    </location>
</feature>
<feature type="region of interest" description="Disordered" evidence="2">
    <location>
        <begin position="1"/>
        <end position="26"/>
    </location>
</feature>
<feature type="region of interest" description="Disordered" evidence="2">
    <location>
        <begin position="669"/>
        <end position="699"/>
    </location>
</feature>
<feature type="modified residue" description="Phosphothreonine" evidence="1">
    <location>
        <position position="9"/>
    </location>
</feature>
<sequence length="800" mass="93252">MSRRRAHDTEDEGYDHRRNKRRRVSENQEIEDRLESLILRVGERSTSSVESNLEGLVSVLEADLGTFRLKILRILSDCAVRMPEKCTVYTTLVGLLNAKNYKFGGEFVDHMVKTFKESLKLCRWDAARYSLRFLADLVNCHVISATSLLQLLDTMIDVSNEDTVPQVRRDWFVFAVLSTLPWVGRDLYEKKESALESLLLRIEVYLNKRSKKHHNALRVWSSDAPHPQEEYLDCLWAQIRKLRQDNWAEKHIPRPYLVFDSILCEALQHNLPQIVPPSHHDAFEYPMPWVVYRMFDYTDCPDGPNLPGAHSIERFLIEEHLHHIIETYHHERKDCAAQLLSFPFKHKIPLEYCIVEVIFAELFHMPTPRYLDICYGSILIELCKLQPATLPQVLAQATEILFMRIDSMNTSCFDRFVNWFSYHLSNFKFTWSWDEWDSCLLLDAEHPRPKFIQEVLQKCLRLSYHQRITEMMPTTYLKLIPPTPSPNYKYANEEAANLPGTTVAHQLVVAIRQKCLPEEVVNILKEIPSSGYSGEEMSDGSFNALKIDVFVQTLLNLGSKSFSHSFAAISKFHSVFRALAETEEAQICILHNIFELWSTHQQMMVVLIDKLLKLQIVDCSAVATWIFSKEMTGEFTKMYLWEILHLTIKKMNKHVIKLNTELSEAKDKLSKADSSSSDSDDDTPHKRKKPITHADKPSEEVVERMEEKLEAANVNQKRLFLIVFQRFIMILSEHLLRSDTDGRDPDTDWYRWTIGRLQQVFLMHHEQVQKYSSTLETLLFTSDLDTHILEVFQQFVALRA</sequence>
<gene>
    <name type="primary">Cbp80</name>
    <name type="ORF">GF21419</name>
</gene>
<keyword id="KW-0506">mRNA capping</keyword>
<keyword id="KW-0507">mRNA processing</keyword>
<keyword id="KW-0508">mRNA splicing</keyword>
<keyword id="KW-0539">Nucleus</keyword>
<keyword id="KW-0597">Phosphoprotein</keyword>
<keyword id="KW-1185">Reference proteome</keyword>
<keyword id="KW-0943">RNA-mediated gene silencing</keyword>
<organism>
    <name type="scientific">Drosophila ananassae</name>
    <name type="common">Fruit fly</name>
    <dbReference type="NCBI Taxonomy" id="7217"/>
    <lineage>
        <taxon>Eukaryota</taxon>
        <taxon>Metazoa</taxon>
        <taxon>Ecdysozoa</taxon>
        <taxon>Arthropoda</taxon>
        <taxon>Hexapoda</taxon>
        <taxon>Insecta</taxon>
        <taxon>Pterygota</taxon>
        <taxon>Neoptera</taxon>
        <taxon>Endopterygota</taxon>
        <taxon>Diptera</taxon>
        <taxon>Brachycera</taxon>
        <taxon>Muscomorpha</taxon>
        <taxon>Ephydroidea</taxon>
        <taxon>Drosophilidae</taxon>
        <taxon>Drosophila</taxon>
        <taxon>Sophophora</taxon>
    </lineage>
</organism>
<name>NCBP1_DROAN</name>
<comment type="function">
    <text evidence="1">Component of the cap-binding complex (CBC), which binds cotranscriptionally to the 5'-cap of pre-mRNAs and is involved in various processes such as pre-mRNA splicing and RNA-mediated gene silencing (RNAi). The CBC complex is involved in miRNA-mediated RNA interference via its interaction with Ars2 and is required for primary microRNAs (miRNAs) processing. Also involved in innate immunity via the short interfering RNAs (siRNAs) processing machinery by restricting the viral RNA production. In the CBC complex, Cbp80 does not bind directly capped RNAs (m7GpppG-capped RNA) but is required to stabilize the movement of the N-terminal loop of Cbp20 and lock the CBC into a high affinity cap-binding state with the cap structure (By similarity).</text>
</comment>
<comment type="subunit">
    <text evidence="1">Component of the nuclear cap-binding complex (CBC), a heterodimer composed of Cbp80 and Cbp20 that interacts with m7GpppG-capped RNA.</text>
</comment>
<comment type="subcellular location">
    <subcellularLocation>
        <location evidence="1">Nucleus</location>
    </subcellularLocation>
</comment>
<comment type="similarity">
    <text evidence="3">Belongs to the NCBP1 family.</text>
</comment>